<name>FLIM_AGRFC</name>
<evidence type="ECO:0000250" key="1"/>
<evidence type="ECO:0000305" key="2"/>
<comment type="function">
    <text evidence="1">FliM is one of three proteins (FliG, FliN, FliM) that forms the rotor-mounted switch complex (C ring), located at the base of the basal body. This complex interacts with the CheY and CheZ chemotaxis proteins, in addition to contacting components of the motor that determine the direction of flagellar rotation (By similarity).</text>
</comment>
<comment type="subcellular location">
    <subcellularLocation>
        <location>Cell inner membrane</location>
        <topology>Peripheral membrane protein</topology>
    </subcellularLocation>
    <subcellularLocation>
        <location>Bacterial flagellum basal body</location>
    </subcellularLocation>
</comment>
<comment type="similarity">
    <text evidence="2">Belongs to the FliM family.</text>
</comment>
<comment type="sequence caution" evidence="2">
    <conflict type="erroneous initiation">
        <sequence resource="EMBL-CDS" id="AAK86373"/>
    </conflict>
    <text>Truncated N-terminus.</text>
</comment>
<keyword id="KW-0975">Bacterial flagellum</keyword>
<keyword id="KW-0997">Cell inner membrane</keyword>
<keyword id="KW-1003">Cell membrane</keyword>
<keyword id="KW-0145">Chemotaxis</keyword>
<keyword id="KW-0283">Flagellar rotation</keyword>
<keyword id="KW-0472">Membrane</keyword>
<keyword id="KW-1185">Reference proteome</keyword>
<feature type="chain" id="PRO_0000180921" description="Flagellar motor switch protein FliM">
    <location>
        <begin position="1"/>
        <end position="321"/>
    </location>
</feature>
<feature type="sequence conflict" description="In Ref. 1; AAC45322/AAB71781." evidence="2" ref="1">
    <original>G</original>
    <variation>C</variation>
    <location>
        <position position="157"/>
    </location>
</feature>
<feature type="sequence conflict" description="In Ref. 1; AAC45322/AAB71781." evidence="2" ref="1">
    <original>E</original>
    <variation>V</variation>
    <location>
        <position position="160"/>
    </location>
</feature>
<gene>
    <name type="primary">fliM</name>
    <name type="ordered locus">Atu0561</name>
    <name type="ORF">AGR_C_987</name>
</gene>
<proteinExistence type="inferred from homology"/>
<accession>Q44457</accession>
<dbReference type="EMBL" id="U63290">
    <property type="protein sequence ID" value="AAC45322.1"/>
    <property type="molecule type" value="Genomic_DNA"/>
</dbReference>
<dbReference type="EMBL" id="U95165">
    <property type="protein sequence ID" value="AAB71781.1"/>
    <property type="molecule type" value="Genomic_DNA"/>
</dbReference>
<dbReference type="EMBL" id="AE007869">
    <property type="protein sequence ID" value="AAK86373.2"/>
    <property type="status" value="ALT_INIT"/>
    <property type="molecule type" value="Genomic_DNA"/>
</dbReference>
<dbReference type="PIR" id="AD2645">
    <property type="entry name" value="AD2645"/>
</dbReference>
<dbReference type="PIR" id="D97427">
    <property type="entry name" value="D97427"/>
</dbReference>
<dbReference type="RefSeq" id="NP_353588.2">
    <property type="nucleotide sequence ID" value="NC_003062.2"/>
</dbReference>
<dbReference type="RefSeq" id="WP_006313026.1">
    <property type="nucleotide sequence ID" value="NC_003062.2"/>
</dbReference>
<dbReference type="SMR" id="Q44457"/>
<dbReference type="STRING" id="176299.Atu0561"/>
<dbReference type="EnsemblBacteria" id="AAK86373">
    <property type="protein sequence ID" value="AAK86373"/>
    <property type="gene ID" value="Atu0561"/>
</dbReference>
<dbReference type="GeneID" id="1132599"/>
<dbReference type="KEGG" id="atu:Atu0561"/>
<dbReference type="PATRIC" id="fig|176299.10.peg.557"/>
<dbReference type="eggNOG" id="COG1868">
    <property type="taxonomic scope" value="Bacteria"/>
</dbReference>
<dbReference type="HOGENOM" id="CLU_879623_0_0_5"/>
<dbReference type="OrthoDB" id="8273530at2"/>
<dbReference type="Proteomes" id="UP000000813">
    <property type="component" value="Chromosome circular"/>
</dbReference>
<dbReference type="GO" id="GO:0009425">
    <property type="term" value="C:bacterial-type flagellum basal body"/>
    <property type="evidence" value="ECO:0007669"/>
    <property type="project" value="UniProtKB-SubCell"/>
</dbReference>
<dbReference type="GO" id="GO:0005886">
    <property type="term" value="C:plasma membrane"/>
    <property type="evidence" value="ECO:0007669"/>
    <property type="project" value="UniProtKB-SubCell"/>
</dbReference>
<dbReference type="GO" id="GO:0071978">
    <property type="term" value="P:bacterial-type flagellum-dependent swarming motility"/>
    <property type="evidence" value="ECO:0007669"/>
    <property type="project" value="TreeGrafter"/>
</dbReference>
<dbReference type="GO" id="GO:0006935">
    <property type="term" value="P:chemotaxis"/>
    <property type="evidence" value="ECO:0000315"/>
    <property type="project" value="GO_Central"/>
</dbReference>
<dbReference type="GO" id="GO:0050918">
    <property type="term" value="P:positive chemotaxis"/>
    <property type="evidence" value="ECO:0007669"/>
    <property type="project" value="TreeGrafter"/>
</dbReference>
<dbReference type="FunFam" id="3.40.1550.10:FF:000009">
    <property type="entry name" value="Flagellar motor switch protein FliM"/>
    <property type="match status" value="1"/>
</dbReference>
<dbReference type="Gene3D" id="3.40.1550.10">
    <property type="entry name" value="CheC-like"/>
    <property type="match status" value="1"/>
</dbReference>
<dbReference type="Gene3D" id="2.30.330.10">
    <property type="entry name" value="SpoA-like"/>
    <property type="match status" value="1"/>
</dbReference>
<dbReference type="InterPro" id="IPR028976">
    <property type="entry name" value="CheC-like_sf"/>
</dbReference>
<dbReference type="InterPro" id="IPR001543">
    <property type="entry name" value="FliN-like_C"/>
</dbReference>
<dbReference type="InterPro" id="IPR036429">
    <property type="entry name" value="SpoA-like_sf"/>
</dbReference>
<dbReference type="PANTHER" id="PTHR30034">
    <property type="entry name" value="FLAGELLAR MOTOR SWITCH PROTEIN FLIM"/>
    <property type="match status" value="1"/>
</dbReference>
<dbReference type="PANTHER" id="PTHR30034:SF6">
    <property type="entry name" value="YOP PROTEINS TRANSLOCATION PROTEIN Q"/>
    <property type="match status" value="1"/>
</dbReference>
<dbReference type="Pfam" id="PF01052">
    <property type="entry name" value="FliMN_C"/>
    <property type="match status" value="1"/>
</dbReference>
<dbReference type="SUPFAM" id="SSF101801">
    <property type="entry name" value="Surface presentation of antigens (SPOA)"/>
    <property type="match status" value="1"/>
</dbReference>
<sequence>MIMAKAAAQKASAPTIDTALLAKLTGGLTDRKTIAKIGADIGHLYSEFLPDTFHSETGIAIDVEYIGSESGLMTDLIANVGQNVAVADCSLRNWCPNFMMAVGNGFVIALMERMLGASPDSIGDPDERNLSHIELDLAAMVLGRIAGVLRSGVNAPGGFEATIDPPFNANGKSAFDEMIAGLYGVTIRMKIDIGKVSSEFSLIVPQRPLLKTSIVAPKASAQALKKQEEWMDMISQQVKRSQVTLEARIKLETLTLRTISRLVAGDVIPFQDLKQDDIGVEVSANGSKLYNCEFGKSGDRYMVRVKNNVSTDDEILRHLMG</sequence>
<protein>
    <recommendedName>
        <fullName>Flagellar motor switch protein FliM</fullName>
    </recommendedName>
</protein>
<reference key="1">
    <citation type="journal article" date="1997" name="Gene">
        <title>The Agrobacterium tumefaciens motor gene, motA, is in a linked cluster with the flagellar switch protein genes, fliG, fliM and fliN.</title>
        <authorList>
            <person name="Deakin W.J."/>
            <person name="Parker V.E."/>
            <person name="Loake G.J."/>
            <person name="Shaw C.H."/>
        </authorList>
    </citation>
    <scope>NUCLEOTIDE SEQUENCE [GENOMIC DNA]</scope>
</reference>
<reference key="2">
    <citation type="journal article" date="2001" name="Science">
        <title>The genome of the natural genetic engineer Agrobacterium tumefaciens C58.</title>
        <authorList>
            <person name="Wood D.W."/>
            <person name="Setubal J.C."/>
            <person name="Kaul R."/>
            <person name="Monks D.E."/>
            <person name="Kitajima J.P."/>
            <person name="Okura V.K."/>
            <person name="Zhou Y."/>
            <person name="Chen L."/>
            <person name="Wood G.E."/>
            <person name="Almeida N.F. Jr."/>
            <person name="Woo L."/>
            <person name="Chen Y."/>
            <person name="Paulsen I.T."/>
            <person name="Eisen J.A."/>
            <person name="Karp P.D."/>
            <person name="Bovee D. Sr."/>
            <person name="Chapman P."/>
            <person name="Clendenning J."/>
            <person name="Deatherage G."/>
            <person name="Gillet W."/>
            <person name="Grant C."/>
            <person name="Kutyavin T."/>
            <person name="Levy R."/>
            <person name="Li M.-J."/>
            <person name="McClelland E."/>
            <person name="Palmieri A."/>
            <person name="Raymond C."/>
            <person name="Rouse G."/>
            <person name="Saenphimmachak C."/>
            <person name="Wu Z."/>
            <person name="Romero P."/>
            <person name="Gordon D."/>
            <person name="Zhang S."/>
            <person name="Yoo H."/>
            <person name="Tao Y."/>
            <person name="Biddle P."/>
            <person name="Jung M."/>
            <person name="Krespan W."/>
            <person name="Perry M."/>
            <person name="Gordon-Kamm B."/>
            <person name="Liao L."/>
            <person name="Kim S."/>
            <person name="Hendrick C."/>
            <person name="Zhao Z.-Y."/>
            <person name="Dolan M."/>
            <person name="Chumley F."/>
            <person name="Tingey S.V."/>
            <person name="Tomb J.-F."/>
            <person name="Gordon M.P."/>
            <person name="Olson M.V."/>
            <person name="Nester E.W."/>
        </authorList>
    </citation>
    <scope>NUCLEOTIDE SEQUENCE [LARGE SCALE GENOMIC DNA]</scope>
    <source>
        <strain>C58 / ATCC 33970</strain>
    </source>
</reference>
<reference key="3">
    <citation type="journal article" date="2001" name="Science">
        <title>Genome sequence of the plant pathogen and biotechnology agent Agrobacterium tumefaciens C58.</title>
        <authorList>
            <person name="Goodner B."/>
            <person name="Hinkle G."/>
            <person name="Gattung S."/>
            <person name="Miller N."/>
            <person name="Blanchard M."/>
            <person name="Qurollo B."/>
            <person name="Goldman B.S."/>
            <person name="Cao Y."/>
            <person name="Askenazi M."/>
            <person name="Halling C."/>
            <person name="Mullin L."/>
            <person name="Houmiel K."/>
            <person name="Gordon J."/>
            <person name="Vaudin M."/>
            <person name="Iartchouk O."/>
            <person name="Epp A."/>
            <person name="Liu F."/>
            <person name="Wollam C."/>
            <person name="Allinger M."/>
            <person name="Doughty D."/>
            <person name="Scott C."/>
            <person name="Lappas C."/>
            <person name="Markelz B."/>
            <person name="Flanagan C."/>
            <person name="Crowell C."/>
            <person name="Gurson J."/>
            <person name="Lomo C."/>
            <person name="Sear C."/>
            <person name="Strub G."/>
            <person name="Cielo C."/>
            <person name="Slater S."/>
        </authorList>
    </citation>
    <scope>NUCLEOTIDE SEQUENCE [LARGE SCALE GENOMIC DNA]</scope>
    <source>
        <strain>C58 / ATCC 33970</strain>
    </source>
</reference>
<organism>
    <name type="scientific">Agrobacterium fabrum (strain C58 / ATCC 33970)</name>
    <name type="common">Agrobacterium tumefaciens (strain C58)</name>
    <dbReference type="NCBI Taxonomy" id="176299"/>
    <lineage>
        <taxon>Bacteria</taxon>
        <taxon>Pseudomonadati</taxon>
        <taxon>Pseudomonadota</taxon>
        <taxon>Alphaproteobacteria</taxon>
        <taxon>Hyphomicrobiales</taxon>
        <taxon>Rhizobiaceae</taxon>
        <taxon>Rhizobium/Agrobacterium group</taxon>
        <taxon>Agrobacterium</taxon>
        <taxon>Agrobacterium tumefaciens complex</taxon>
    </lineage>
</organism>